<feature type="chain" id="PRO_1000115488" description="ATP-dependent Clp protease adapter protein ClpS">
    <location>
        <begin position="1"/>
        <end position="106"/>
    </location>
</feature>
<sequence length="106" mass="12305">MGKNNDWLNFEHLVKDKQIEALQPPSMYKVILNNDDYTPMEFVIDVLQKFFSYDIERATQLMLNVHYQGKAICGVFTAEVAETKVAHVNQYARENEHPLLCTLEKA</sequence>
<dbReference type="EMBL" id="CP001048">
    <property type="protein sequence ID" value="ACC88465.1"/>
    <property type="molecule type" value="Genomic_DNA"/>
</dbReference>
<dbReference type="RefSeq" id="WP_002211349.1">
    <property type="nucleotide sequence ID" value="NZ_CP009780.1"/>
</dbReference>
<dbReference type="SMR" id="B2KA00"/>
<dbReference type="GeneID" id="96664964"/>
<dbReference type="KEGG" id="ypb:YPTS_1493"/>
<dbReference type="PATRIC" id="fig|502801.10.peg.855"/>
<dbReference type="GO" id="GO:0030163">
    <property type="term" value="P:protein catabolic process"/>
    <property type="evidence" value="ECO:0007669"/>
    <property type="project" value="InterPro"/>
</dbReference>
<dbReference type="GO" id="GO:0006508">
    <property type="term" value="P:proteolysis"/>
    <property type="evidence" value="ECO:0007669"/>
    <property type="project" value="UniProtKB-UniRule"/>
</dbReference>
<dbReference type="FunFam" id="3.30.1390.10:FF:000002">
    <property type="entry name" value="ATP-dependent Clp protease adapter protein ClpS"/>
    <property type="match status" value="1"/>
</dbReference>
<dbReference type="Gene3D" id="3.30.1390.10">
    <property type="match status" value="1"/>
</dbReference>
<dbReference type="HAMAP" id="MF_00302">
    <property type="entry name" value="ClpS"/>
    <property type="match status" value="1"/>
</dbReference>
<dbReference type="InterPro" id="IPR022935">
    <property type="entry name" value="ClpS"/>
</dbReference>
<dbReference type="InterPro" id="IPR003769">
    <property type="entry name" value="ClpS_core"/>
</dbReference>
<dbReference type="InterPro" id="IPR014719">
    <property type="entry name" value="Ribosomal_bL12_C/ClpS-like"/>
</dbReference>
<dbReference type="NCBIfam" id="NF000670">
    <property type="entry name" value="PRK00033.1-3"/>
    <property type="match status" value="1"/>
</dbReference>
<dbReference type="NCBIfam" id="NF000672">
    <property type="entry name" value="PRK00033.1-5"/>
    <property type="match status" value="1"/>
</dbReference>
<dbReference type="PANTHER" id="PTHR33473:SF19">
    <property type="entry name" value="ATP-DEPENDENT CLP PROTEASE ADAPTER PROTEIN CLPS"/>
    <property type="match status" value="1"/>
</dbReference>
<dbReference type="PANTHER" id="PTHR33473">
    <property type="entry name" value="ATP-DEPENDENT CLP PROTEASE ADAPTER PROTEIN CLPS1, CHLOROPLASTIC"/>
    <property type="match status" value="1"/>
</dbReference>
<dbReference type="Pfam" id="PF02617">
    <property type="entry name" value="ClpS"/>
    <property type="match status" value="1"/>
</dbReference>
<dbReference type="SUPFAM" id="SSF54736">
    <property type="entry name" value="ClpS-like"/>
    <property type="match status" value="1"/>
</dbReference>
<proteinExistence type="inferred from homology"/>
<accession>B2KA00</accession>
<protein>
    <recommendedName>
        <fullName evidence="1">ATP-dependent Clp protease adapter protein ClpS</fullName>
    </recommendedName>
</protein>
<name>CLPS_YERPB</name>
<gene>
    <name evidence="1" type="primary">clpS</name>
    <name type="ordered locus">YPTS_1493</name>
</gene>
<comment type="function">
    <text evidence="1">Involved in the modulation of the specificity of the ClpAP-mediated ATP-dependent protein degradation.</text>
</comment>
<comment type="subunit">
    <text evidence="1">Binds to the N-terminal domain of the chaperone ClpA.</text>
</comment>
<comment type="similarity">
    <text evidence="1">Belongs to the ClpS family.</text>
</comment>
<evidence type="ECO:0000255" key="1">
    <source>
        <dbReference type="HAMAP-Rule" id="MF_00302"/>
    </source>
</evidence>
<reference key="1">
    <citation type="submission" date="2008-04" db="EMBL/GenBank/DDBJ databases">
        <title>Complete sequence of Yersinia pseudotuberculosis PB1/+.</title>
        <authorList>
            <person name="Copeland A."/>
            <person name="Lucas S."/>
            <person name="Lapidus A."/>
            <person name="Glavina del Rio T."/>
            <person name="Dalin E."/>
            <person name="Tice H."/>
            <person name="Bruce D."/>
            <person name="Goodwin L."/>
            <person name="Pitluck S."/>
            <person name="Munk A.C."/>
            <person name="Brettin T."/>
            <person name="Detter J.C."/>
            <person name="Han C."/>
            <person name="Tapia R."/>
            <person name="Schmutz J."/>
            <person name="Larimer F."/>
            <person name="Land M."/>
            <person name="Hauser L."/>
            <person name="Challacombe J.F."/>
            <person name="Green L."/>
            <person name="Lindler L.E."/>
            <person name="Nikolich M.P."/>
            <person name="Richardson P."/>
        </authorList>
    </citation>
    <scope>NUCLEOTIDE SEQUENCE [LARGE SCALE GENOMIC DNA]</scope>
    <source>
        <strain>PB1/+</strain>
    </source>
</reference>
<organism>
    <name type="scientific">Yersinia pseudotuberculosis serotype IB (strain PB1/+)</name>
    <dbReference type="NCBI Taxonomy" id="502801"/>
    <lineage>
        <taxon>Bacteria</taxon>
        <taxon>Pseudomonadati</taxon>
        <taxon>Pseudomonadota</taxon>
        <taxon>Gammaproteobacteria</taxon>
        <taxon>Enterobacterales</taxon>
        <taxon>Yersiniaceae</taxon>
        <taxon>Yersinia</taxon>
    </lineage>
</organism>